<gene>
    <name evidence="1" type="primary">hflX</name>
    <name type="ordered locus">STHERM_c20490</name>
</gene>
<organism>
    <name type="scientific">Spirochaeta thermophila (strain ATCC 49972 / DSM 6192 / RI 19.B1)</name>
    <dbReference type="NCBI Taxonomy" id="665571"/>
    <lineage>
        <taxon>Bacteria</taxon>
        <taxon>Pseudomonadati</taxon>
        <taxon>Spirochaetota</taxon>
        <taxon>Spirochaetia</taxon>
        <taxon>Spirochaetales</taxon>
        <taxon>Spirochaetaceae</taxon>
        <taxon>Spirochaeta</taxon>
    </lineage>
</organism>
<dbReference type="EMBL" id="CP001698">
    <property type="protein sequence ID" value="ADN02983.1"/>
    <property type="molecule type" value="Genomic_DNA"/>
</dbReference>
<dbReference type="RefSeq" id="WP_013314822.1">
    <property type="nucleotide sequence ID" value="NC_014484.1"/>
</dbReference>
<dbReference type="SMR" id="E0RQS7"/>
<dbReference type="PaxDb" id="665571-STHERM_c20490"/>
<dbReference type="KEGG" id="sta:STHERM_c20490"/>
<dbReference type="eggNOG" id="COG2262">
    <property type="taxonomic scope" value="Bacteria"/>
</dbReference>
<dbReference type="HOGENOM" id="CLU_019597_0_1_12"/>
<dbReference type="Proteomes" id="UP000001296">
    <property type="component" value="Chromosome"/>
</dbReference>
<dbReference type="GO" id="GO:0005737">
    <property type="term" value="C:cytoplasm"/>
    <property type="evidence" value="ECO:0007669"/>
    <property type="project" value="UniProtKB-SubCell"/>
</dbReference>
<dbReference type="GO" id="GO:0005525">
    <property type="term" value="F:GTP binding"/>
    <property type="evidence" value="ECO:0007669"/>
    <property type="project" value="UniProtKB-UniRule"/>
</dbReference>
<dbReference type="GO" id="GO:0003924">
    <property type="term" value="F:GTPase activity"/>
    <property type="evidence" value="ECO:0007669"/>
    <property type="project" value="UniProtKB-UniRule"/>
</dbReference>
<dbReference type="GO" id="GO:0046872">
    <property type="term" value="F:metal ion binding"/>
    <property type="evidence" value="ECO:0007669"/>
    <property type="project" value="UniProtKB-KW"/>
</dbReference>
<dbReference type="GO" id="GO:0043022">
    <property type="term" value="F:ribosome binding"/>
    <property type="evidence" value="ECO:0007669"/>
    <property type="project" value="TreeGrafter"/>
</dbReference>
<dbReference type="CDD" id="cd01878">
    <property type="entry name" value="HflX"/>
    <property type="match status" value="1"/>
</dbReference>
<dbReference type="Gene3D" id="6.10.250.2860">
    <property type="match status" value="1"/>
</dbReference>
<dbReference type="Gene3D" id="3.40.50.11060">
    <property type="entry name" value="GTPase HflX, N-terminal domain"/>
    <property type="match status" value="1"/>
</dbReference>
<dbReference type="Gene3D" id="3.40.50.300">
    <property type="entry name" value="P-loop containing nucleotide triphosphate hydrolases"/>
    <property type="match status" value="1"/>
</dbReference>
<dbReference type="HAMAP" id="MF_00900">
    <property type="entry name" value="GTPase_HflX"/>
    <property type="match status" value="1"/>
</dbReference>
<dbReference type="InterPro" id="IPR030394">
    <property type="entry name" value="G_HFLX_dom"/>
</dbReference>
<dbReference type="InterPro" id="IPR006073">
    <property type="entry name" value="GTP-bd"/>
</dbReference>
<dbReference type="InterPro" id="IPR032305">
    <property type="entry name" value="GTP-bd_M"/>
</dbReference>
<dbReference type="InterPro" id="IPR016496">
    <property type="entry name" value="GTPase_HflX"/>
</dbReference>
<dbReference type="InterPro" id="IPR025121">
    <property type="entry name" value="GTPase_HflX_N"/>
</dbReference>
<dbReference type="InterPro" id="IPR042108">
    <property type="entry name" value="GTPase_HflX_N_sf"/>
</dbReference>
<dbReference type="InterPro" id="IPR027417">
    <property type="entry name" value="P-loop_NTPase"/>
</dbReference>
<dbReference type="NCBIfam" id="TIGR03156">
    <property type="entry name" value="GTP_HflX"/>
    <property type="match status" value="1"/>
</dbReference>
<dbReference type="PANTHER" id="PTHR10229:SF0">
    <property type="entry name" value="GTP-BINDING PROTEIN 6-RELATED"/>
    <property type="match status" value="1"/>
</dbReference>
<dbReference type="PANTHER" id="PTHR10229">
    <property type="entry name" value="GTP-BINDING PROTEIN HFLX"/>
    <property type="match status" value="1"/>
</dbReference>
<dbReference type="Pfam" id="PF16360">
    <property type="entry name" value="GTP-bdg_M"/>
    <property type="match status" value="1"/>
</dbReference>
<dbReference type="Pfam" id="PF13167">
    <property type="entry name" value="GTP-bdg_N"/>
    <property type="match status" value="1"/>
</dbReference>
<dbReference type="Pfam" id="PF01926">
    <property type="entry name" value="MMR_HSR1"/>
    <property type="match status" value="1"/>
</dbReference>
<dbReference type="PIRSF" id="PIRSF006809">
    <property type="entry name" value="GTP-binding_hflX_prd"/>
    <property type="match status" value="1"/>
</dbReference>
<dbReference type="PRINTS" id="PR00326">
    <property type="entry name" value="GTP1OBG"/>
</dbReference>
<dbReference type="SUPFAM" id="SSF52540">
    <property type="entry name" value="P-loop containing nucleoside triphosphate hydrolases"/>
    <property type="match status" value="1"/>
</dbReference>
<dbReference type="PROSITE" id="PS51705">
    <property type="entry name" value="G_HFLX"/>
    <property type="match status" value="1"/>
</dbReference>
<protein>
    <recommendedName>
        <fullName evidence="1">GTPase HflX</fullName>
    </recommendedName>
    <alternativeName>
        <fullName evidence="1">GTP-binding protein HflX</fullName>
    </alternativeName>
</protein>
<keyword id="KW-0963">Cytoplasm</keyword>
<keyword id="KW-0342">GTP-binding</keyword>
<keyword id="KW-0460">Magnesium</keyword>
<keyword id="KW-0479">Metal-binding</keyword>
<keyword id="KW-0547">Nucleotide-binding</keyword>
<sequence length="408" mass="46468">MYDTGQEAPRCILVGRKTGREETSSLPELSLLVEELGYIPETILSFPLRTPERKFLFGPGQAEVVAREARMRGIELVVFDEDLTPAQQRNWEHLVKSRVMDRTEVIIEIFSRHARTKQAQLQTEKARLEYLLPRLRGAWSHLDRQRGGARGTRGEGERQIELDRRMILSRLARIRREMEAIERHQTTTRSRRLEAGIPRVSLVGYTNAGKSSLFTRLTGQAVRIQDRPFVTLDTTTRTCLIPGWGRVVVSDTVGFIQHLPHTLVDAFHATLEEVRDAHLLLEVVDLSSPNLLLHLSTTEEVLTEIGAHHIPRIRVYNKADRSSPHPLLPPSDHPEILVSAKTGEGIEGLLSLIVREMERHYPIETLELPYHRLGESHEVLSRAVIIHQEYTDVGLFVRYAPSVPSVHE</sequence>
<evidence type="ECO:0000255" key="1">
    <source>
        <dbReference type="HAMAP-Rule" id="MF_00900"/>
    </source>
</evidence>
<reference key="1">
    <citation type="journal article" date="2010" name="J. Bacteriol.">
        <title>Genome sequence of the polysaccharide-degrading, thermophilic anaerobe Spirochaeta thermophila DSM 6192.</title>
        <authorList>
            <person name="Angelov A."/>
            <person name="Liebl S."/>
            <person name="Ballschmiter M."/>
            <person name="Bomeke M."/>
            <person name="Lehmann R."/>
            <person name="Liesegang H."/>
            <person name="Daniel R."/>
            <person name="Liebl W."/>
        </authorList>
    </citation>
    <scope>NUCLEOTIDE SEQUENCE [LARGE SCALE GENOMIC DNA]</scope>
    <source>
        <strain>ATCC 49972 / DSM 6192 / RI 19.B1</strain>
    </source>
</reference>
<accession>E0RQS7</accession>
<comment type="function">
    <text evidence="1">GTPase that associates with the 50S ribosomal subunit and may have a role during protein synthesis or ribosome biogenesis.</text>
</comment>
<comment type="cofactor">
    <cofactor evidence="1">
        <name>Mg(2+)</name>
        <dbReference type="ChEBI" id="CHEBI:18420"/>
    </cofactor>
</comment>
<comment type="subunit">
    <text evidence="1">Monomer. Associates with the 50S ribosomal subunit.</text>
</comment>
<comment type="subcellular location">
    <subcellularLocation>
        <location evidence="1">Cytoplasm</location>
    </subcellularLocation>
    <text evidence="1">May associate with membranes.</text>
</comment>
<comment type="similarity">
    <text evidence="1">Belongs to the TRAFAC class OBG-HflX-like GTPase superfamily. HflX GTPase family.</text>
</comment>
<feature type="chain" id="PRO_0000412662" description="GTPase HflX">
    <location>
        <begin position="1"/>
        <end position="408"/>
    </location>
</feature>
<feature type="domain" description="Hflx-type G" evidence="1">
    <location>
        <begin position="198"/>
        <end position="361"/>
    </location>
</feature>
<feature type="binding site" evidence="1">
    <location>
        <begin position="204"/>
        <end position="211"/>
    </location>
    <ligand>
        <name>GTP</name>
        <dbReference type="ChEBI" id="CHEBI:37565"/>
    </ligand>
</feature>
<feature type="binding site" evidence="1">
    <location>
        <position position="211"/>
    </location>
    <ligand>
        <name>Mg(2+)</name>
        <dbReference type="ChEBI" id="CHEBI:18420"/>
    </ligand>
</feature>
<feature type="binding site" evidence="1">
    <location>
        <begin position="229"/>
        <end position="233"/>
    </location>
    <ligand>
        <name>GTP</name>
        <dbReference type="ChEBI" id="CHEBI:37565"/>
    </ligand>
</feature>
<feature type="binding site" evidence="1">
    <location>
        <position position="231"/>
    </location>
    <ligand>
        <name>Mg(2+)</name>
        <dbReference type="ChEBI" id="CHEBI:18420"/>
    </ligand>
</feature>
<feature type="binding site" evidence="1">
    <location>
        <begin position="251"/>
        <end position="254"/>
    </location>
    <ligand>
        <name>GTP</name>
        <dbReference type="ChEBI" id="CHEBI:37565"/>
    </ligand>
</feature>
<feature type="binding site" evidence="1">
    <location>
        <begin position="317"/>
        <end position="320"/>
    </location>
    <ligand>
        <name>GTP</name>
        <dbReference type="ChEBI" id="CHEBI:37565"/>
    </ligand>
</feature>
<feature type="binding site" evidence="1">
    <location>
        <begin position="339"/>
        <end position="341"/>
    </location>
    <ligand>
        <name>GTP</name>
        <dbReference type="ChEBI" id="CHEBI:37565"/>
    </ligand>
</feature>
<proteinExistence type="inferred from homology"/>
<name>HFLX_SPITD</name>